<feature type="chain" id="PRO_0000239817" description="Heat shock protein 81-2">
    <location>
        <begin position="1"/>
        <end position="699"/>
    </location>
</feature>
<feature type="region of interest" description="Disordered" evidence="2">
    <location>
        <begin position="215"/>
        <end position="250"/>
    </location>
</feature>
<feature type="region of interest" description="Disordered" evidence="2">
    <location>
        <begin position="674"/>
        <end position="699"/>
    </location>
</feature>
<feature type="short sequence motif" description="TPR repeat-binding">
    <location>
        <begin position="695"/>
        <end position="699"/>
    </location>
</feature>
<feature type="compositionally biased region" description="Basic and acidic residues" evidence="2">
    <location>
        <begin position="228"/>
        <end position="237"/>
    </location>
</feature>
<feature type="compositionally biased region" description="Acidic residues" evidence="2">
    <location>
        <begin position="674"/>
        <end position="690"/>
    </location>
</feature>
<feature type="binding site" evidence="1">
    <location>
        <position position="39"/>
    </location>
    <ligand>
        <name>ATP</name>
        <dbReference type="ChEBI" id="CHEBI:30616"/>
    </ligand>
</feature>
<feature type="binding site" evidence="1">
    <location>
        <position position="81"/>
    </location>
    <ligand>
        <name>ATP</name>
        <dbReference type="ChEBI" id="CHEBI:30616"/>
    </ligand>
</feature>
<feature type="binding site" evidence="1">
    <location>
        <position position="126"/>
    </location>
    <ligand>
        <name>ATP</name>
        <dbReference type="ChEBI" id="CHEBI:30616"/>
    </ligand>
</feature>
<feature type="binding site" evidence="1">
    <location>
        <position position="373"/>
    </location>
    <ligand>
        <name>ATP</name>
        <dbReference type="ChEBI" id="CHEBI:30616"/>
    </ligand>
</feature>
<feature type="sequence conflict" description="In Ref. 1; BAD04054." evidence="3" ref="1">
    <original>V</original>
    <variation>L</variation>
    <location>
        <position position="239"/>
    </location>
</feature>
<keyword id="KW-0067">ATP-binding</keyword>
<keyword id="KW-0143">Chaperone</keyword>
<keyword id="KW-0963">Cytoplasm</keyword>
<keyword id="KW-0547">Nucleotide-binding</keyword>
<keyword id="KW-1185">Reference proteome</keyword>
<keyword id="KW-0346">Stress response</keyword>
<sequence length="699" mass="80200">MASETETFAFQAEINQLLSLIINTFYSNKEIFLRELISNSSDALDKIRFESLTDKSKLDAQPELFIHIVPDKASNTLSIIDSGVGMTKSDLVNNLGTIARSGTKEFMEALAAGADVSMIGQFGVGFYSAYLVAERVVVTTKHNDDEQYVWESQAGGSFTVTRDTSGEQLGRGTKITLYLKDDQLEYLEERRLKDLVKKHSEFISYPISLWTEKTTEKEISDDEDEEEKKDAEEGKVEDVDEEKEEKEKKKKKIKEVSHEWNVMNKQKPIWLRKPEEITKEEYAAFYKSLTNDWEEHLAVKHFSVEGQLEFKAILFVPKRAPFDLFDTRKKQNNIKLYVRRVFIMDNCEELIPEWLSFVKGIVDSEDLPLNISREMLQQNKILKVIRKNLVKKCVELFFEIAENKEDYNKFYEAFSKNLKLGIHEDSTNRTKIAELLRYHSTKSGDELTSLKDYVTRMKEGQSEIYYITGESKKAVENSPFLEKLKKKGYEVLYMVDAIDEYAVGQLKEFEGKKLVSATKEGLKLDESEDEKKRQEELKEKFEGLCKVIKEVLGDKVEKVVVSDRVVDSPCCLVTGEYGWTANMERIMKAQALRDSSMAGYMSSKKTMEINPENSIMDELRKRADADKNDKSVKDLVMLLFETALLTSGFSLEDPNTFGTRIHRMLKLGLSIDEDESAEADADMPPLEDDAGESKMEEVD</sequence>
<evidence type="ECO:0000250" key="1"/>
<evidence type="ECO:0000256" key="2">
    <source>
        <dbReference type="SAM" id="MobiDB-lite"/>
    </source>
</evidence>
<evidence type="ECO:0000305" key="3"/>
<proteinExistence type="evidence at transcript level"/>
<name>HSP82_ORYSJ</name>
<dbReference type="EMBL" id="AB111810">
    <property type="protein sequence ID" value="BAD04054.1"/>
    <property type="molecule type" value="mRNA"/>
</dbReference>
<dbReference type="EMBL" id="AP005392">
    <property type="protein sequence ID" value="BAD33406.1"/>
    <property type="molecule type" value="Genomic_DNA"/>
</dbReference>
<dbReference type="EMBL" id="AP008215">
    <property type="protein sequence ID" value="BAF25414.1"/>
    <property type="molecule type" value="Genomic_DNA"/>
</dbReference>
<dbReference type="EMBL" id="AP014965">
    <property type="protein sequence ID" value="BAT08651.1"/>
    <property type="molecule type" value="Genomic_DNA"/>
</dbReference>
<dbReference type="RefSeq" id="XP_015611110.1">
    <property type="nucleotide sequence ID" value="XM_015755624.1"/>
</dbReference>
<dbReference type="SMR" id="Q69QQ6"/>
<dbReference type="FunCoup" id="Q69QQ6">
    <property type="interactions" value="2490"/>
</dbReference>
<dbReference type="STRING" id="39947.Q69QQ6"/>
<dbReference type="PaxDb" id="39947-Q69QQ6"/>
<dbReference type="EnsemblPlants" id="Os09t0482100-01">
    <property type="protein sequence ID" value="Os09t0482100-01"/>
    <property type="gene ID" value="Os09g0482100"/>
</dbReference>
<dbReference type="Gramene" id="Os09t0482100-01">
    <property type="protein sequence ID" value="Os09t0482100-01"/>
    <property type="gene ID" value="Os09g0482100"/>
</dbReference>
<dbReference type="KEGG" id="dosa:Os09g0482100"/>
<dbReference type="eggNOG" id="KOG0019">
    <property type="taxonomic scope" value="Eukaryota"/>
</dbReference>
<dbReference type="HOGENOM" id="CLU_006684_1_3_1"/>
<dbReference type="InParanoid" id="Q69QQ6"/>
<dbReference type="OMA" id="CYMWESS"/>
<dbReference type="OrthoDB" id="988614at2759"/>
<dbReference type="Proteomes" id="UP000000763">
    <property type="component" value="Chromosome 9"/>
</dbReference>
<dbReference type="Proteomes" id="UP000059680">
    <property type="component" value="Chromosome 9"/>
</dbReference>
<dbReference type="GO" id="GO:0005829">
    <property type="term" value="C:cytosol"/>
    <property type="evidence" value="ECO:0000318"/>
    <property type="project" value="GO_Central"/>
</dbReference>
<dbReference type="GO" id="GO:0048471">
    <property type="term" value="C:perinuclear region of cytoplasm"/>
    <property type="evidence" value="ECO:0000318"/>
    <property type="project" value="GO_Central"/>
</dbReference>
<dbReference type="GO" id="GO:0005886">
    <property type="term" value="C:plasma membrane"/>
    <property type="evidence" value="ECO:0000318"/>
    <property type="project" value="GO_Central"/>
</dbReference>
<dbReference type="GO" id="GO:0032991">
    <property type="term" value="C:protein-containing complex"/>
    <property type="evidence" value="ECO:0000318"/>
    <property type="project" value="GO_Central"/>
</dbReference>
<dbReference type="GO" id="GO:0005524">
    <property type="term" value="F:ATP binding"/>
    <property type="evidence" value="ECO:0000318"/>
    <property type="project" value="GO_Central"/>
</dbReference>
<dbReference type="GO" id="GO:0016887">
    <property type="term" value="F:ATP hydrolysis activity"/>
    <property type="evidence" value="ECO:0000318"/>
    <property type="project" value="GO_Central"/>
</dbReference>
<dbReference type="GO" id="GO:0140662">
    <property type="term" value="F:ATP-dependent protein folding chaperone"/>
    <property type="evidence" value="ECO:0007669"/>
    <property type="project" value="InterPro"/>
</dbReference>
<dbReference type="GO" id="GO:0051082">
    <property type="term" value="F:unfolded protein binding"/>
    <property type="evidence" value="ECO:0000318"/>
    <property type="project" value="GO_Central"/>
</dbReference>
<dbReference type="GO" id="GO:0034605">
    <property type="term" value="P:cellular response to heat"/>
    <property type="evidence" value="ECO:0000318"/>
    <property type="project" value="GO_Central"/>
</dbReference>
<dbReference type="GO" id="GO:0006457">
    <property type="term" value="P:protein folding"/>
    <property type="evidence" value="ECO:0000318"/>
    <property type="project" value="GO_Central"/>
</dbReference>
<dbReference type="GO" id="GO:0050821">
    <property type="term" value="P:protein stabilization"/>
    <property type="evidence" value="ECO:0000318"/>
    <property type="project" value="GO_Central"/>
</dbReference>
<dbReference type="CDD" id="cd16927">
    <property type="entry name" value="HATPase_Hsp90-like"/>
    <property type="match status" value="1"/>
</dbReference>
<dbReference type="FunFam" id="3.30.565.10:FF:000012">
    <property type="entry name" value="Heat shock cognate protein"/>
    <property type="match status" value="1"/>
</dbReference>
<dbReference type="FunFam" id="1.20.120.790:FF:000001">
    <property type="entry name" value="Heat shock protein 90 alpha"/>
    <property type="match status" value="1"/>
</dbReference>
<dbReference type="FunFam" id="3.30.230.80:FF:000001">
    <property type="entry name" value="Heat shock protein 90 alpha"/>
    <property type="match status" value="1"/>
</dbReference>
<dbReference type="FunFam" id="3.40.50.11260:FF:000001">
    <property type="entry name" value="Heat shock protein 90 alpha"/>
    <property type="match status" value="1"/>
</dbReference>
<dbReference type="Gene3D" id="3.30.230.80">
    <property type="match status" value="1"/>
</dbReference>
<dbReference type="Gene3D" id="3.40.50.11260">
    <property type="match status" value="1"/>
</dbReference>
<dbReference type="Gene3D" id="1.20.120.790">
    <property type="entry name" value="Heat shock protein 90, C-terminal domain"/>
    <property type="match status" value="1"/>
</dbReference>
<dbReference type="Gene3D" id="3.30.565.10">
    <property type="entry name" value="Histidine kinase-like ATPase, C-terminal domain"/>
    <property type="match status" value="1"/>
</dbReference>
<dbReference type="HAMAP" id="MF_00505">
    <property type="entry name" value="HSP90"/>
    <property type="match status" value="1"/>
</dbReference>
<dbReference type="InterPro" id="IPR036890">
    <property type="entry name" value="HATPase_C_sf"/>
</dbReference>
<dbReference type="InterPro" id="IPR019805">
    <property type="entry name" value="Heat_shock_protein_90_CS"/>
</dbReference>
<dbReference type="InterPro" id="IPR037196">
    <property type="entry name" value="HSP90_C"/>
</dbReference>
<dbReference type="InterPro" id="IPR001404">
    <property type="entry name" value="Hsp90_fam"/>
</dbReference>
<dbReference type="InterPro" id="IPR020575">
    <property type="entry name" value="Hsp90_N"/>
</dbReference>
<dbReference type="InterPro" id="IPR020568">
    <property type="entry name" value="Ribosomal_Su5_D2-typ_SF"/>
</dbReference>
<dbReference type="NCBIfam" id="NF003555">
    <property type="entry name" value="PRK05218.1"/>
    <property type="match status" value="1"/>
</dbReference>
<dbReference type="PANTHER" id="PTHR11528">
    <property type="entry name" value="HEAT SHOCK PROTEIN 90 FAMILY MEMBER"/>
    <property type="match status" value="1"/>
</dbReference>
<dbReference type="Pfam" id="PF13589">
    <property type="entry name" value="HATPase_c_3"/>
    <property type="match status" value="1"/>
</dbReference>
<dbReference type="Pfam" id="PF00183">
    <property type="entry name" value="HSP90"/>
    <property type="match status" value="1"/>
</dbReference>
<dbReference type="PIRSF" id="PIRSF002583">
    <property type="entry name" value="Hsp90"/>
    <property type="match status" value="1"/>
</dbReference>
<dbReference type="PRINTS" id="PR00775">
    <property type="entry name" value="HEATSHOCK90"/>
</dbReference>
<dbReference type="SMART" id="SM00387">
    <property type="entry name" value="HATPase_c"/>
    <property type="match status" value="1"/>
</dbReference>
<dbReference type="SUPFAM" id="SSF55874">
    <property type="entry name" value="ATPase domain of HSP90 chaperone/DNA topoisomerase II/histidine kinase"/>
    <property type="match status" value="1"/>
</dbReference>
<dbReference type="SUPFAM" id="SSF110942">
    <property type="entry name" value="HSP90 C-terminal domain"/>
    <property type="match status" value="1"/>
</dbReference>
<dbReference type="SUPFAM" id="SSF54211">
    <property type="entry name" value="Ribosomal protein S5 domain 2-like"/>
    <property type="match status" value="1"/>
</dbReference>
<dbReference type="PROSITE" id="PS00298">
    <property type="entry name" value="HSP90"/>
    <property type="match status" value="1"/>
</dbReference>
<protein>
    <recommendedName>
        <fullName>Heat shock protein 81-2</fullName>
        <shortName>HSP81-2</shortName>
    </recommendedName>
    <alternativeName>
        <fullName>Heat shock protein 90</fullName>
    </alternativeName>
</protein>
<accession>Q69QQ6</accession>
<accession>Q0J0V1</accession>
<accession>Q76B83</accession>
<reference key="1">
    <citation type="submission" date="2003-06" db="EMBL/GenBank/DDBJ databases">
        <title>Cytoplasmic Hsp90 in rice.</title>
        <authorList>
            <person name="Kanzaki H."/>
            <person name="Terauchi R."/>
        </authorList>
    </citation>
    <scope>NUCLEOTIDE SEQUENCE [MRNA]</scope>
    <source>
        <strain>cv. Sasanishiki</strain>
        <tissue>Leaf</tissue>
    </source>
</reference>
<reference key="2">
    <citation type="journal article" date="2005" name="Nature">
        <title>The map-based sequence of the rice genome.</title>
        <authorList>
            <consortium name="International rice genome sequencing project (IRGSP)"/>
        </authorList>
    </citation>
    <scope>NUCLEOTIDE SEQUENCE [LARGE SCALE GENOMIC DNA]</scope>
    <source>
        <strain>cv. Nipponbare</strain>
    </source>
</reference>
<reference key="3">
    <citation type="journal article" date="2008" name="Nucleic Acids Res.">
        <title>The rice annotation project database (RAP-DB): 2008 update.</title>
        <authorList>
            <consortium name="The rice annotation project (RAP)"/>
        </authorList>
    </citation>
    <scope>GENOME REANNOTATION</scope>
    <source>
        <strain>cv. Nipponbare</strain>
    </source>
</reference>
<reference key="4">
    <citation type="journal article" date="2013" name="Rice">
        <title>Improvement of the Oryza sativa Nipponbare reference genome using next generation sequence and optical map data.</title>
        <authorList>
            <person name="Kawahara Y."/>
            <person name="de la Bastide M."/>
            <person name="Hamilton J.P."/>
            <person name="Kanamori H."/>
            <person name="McCombie W.R."/>
            <person name="Ouyang S."/>
            <person name="Schwartz D.C."/>
            <person name="Tanaka T."/>
            <person name="Wu J."/>
            <person name="Zhou S."/>
            <person name="Childs K.L."/>
            <person name="Davidson R.M."/>
            <person name="Lin H."/>
            <person name="Quesada-Ocampo L."/>
            <person name="Vaillancourt B."/>
            <person name="Sakai H."/>
            <person name="Lee S.S."/>
            <person name="Kim J."/>
            <person name="Numa H."/>
            <person name="Itoh T."/>
            <person name="Buell C.R."/>
            <person name="Matsumoto T."/>
        </authorList>
    </citation>
    <scope>GENOME REANNOTATION</scope>
    <source>
        <strain>cv. Nipponbare</strain>
    </source>
</reference>
<organism>
    <name type="scientific">Oryza sativa subsp. japonica</name>
    <name type="common">Rice</name>
    <dbReference type="NCBI Taxonomy" id="39947"/>
    <lineage>
        <taxon>Eukaryota</taxon>
        <taxon>Viridiplantae</taxon>
        <taxon>Streptophyta</taxon>
        <taxon>Embryophyta</taxon>
        <taxon>Tracheophyta</taxon>
        <taxon>Spermatophyta</taxon>
        <taxon>Magnoliopsida</taxon>
        <taxon>Liliopsida</taxon>
        <taxon>Poales</taxon>
        <taxon>Poaceae</taxon>
        <taxon>BOP clade</taxon>
        <taxon>Oryzoideae</taxon>
        <taxon>Oryzeae</taxon>
        <taxon>Oryzinae</taxon>
        <taxon>Oryza</taxon>
        <taxon>Oryza sativa</taxon>
    </lineage>
</organism>
<gene>
    <name type="primary">HSP81-2</name>
    <name type="synonym">HSP90</name>
    <name type="ordered locus">Os09g0482100</name>
    <name type="ordered locus">LOC_Os09g30418</name>
    <name type="ORF">P0463D04.32</name>
</gene>
<comment type="function">
    <text evidence="1">Molecular chaperone that promotes the maturation, structural maintenance and proper regulation of specific target proteins involved for instance in cell cycle control and signal transduction. Undergoes a functional cycle that is linked to its ATPase activity. This cycle probably induces conformational changes in the client proteins, thereby causing their activation. Interacts dynamically with various co-chaperones that modulate its substrate recognition, ATPase cycle and chaperone function (By similarity).</text>
</comment>
<comment type="subunit">
    <text evidence="1">Homodimer.</text>
</comment>
<comment type="subcellular location">
    <subcellularLocation>
        <location evidence="3">Cytoplasm</location>
    </subcellularLocation>
</comment>
<comment type="domain">
    <text evidence="1">The TPR repeat-binding motif mediates interaction with TPR repeat-containing proteins.</text>
</comment>
<comment type="similarity">
    <text evidence="3">Belongs to the heat shock protein 90 family.</text>
</comment>